<proteinExistence type="inferred from homology"/>
<protein>
    <recommendedName>
        <fullName>HssA/B-like protein 52</fullName>
    </recommendedName>
</protein>
<keyword id="KW-1185">Reference proteome</keyword>
<gene>
    <name type="primary">hssl52</name>
    <name type="ORF">DDB_G0281019</name>
</gene>
<dbReference type="EMBL" id="AAFI02000040">
    <property type="protein sequence ID" value="EAL66806.1"/>
    <property type="molecule type" value="Genomic_DNA"/>
</dbReference>
<dbReference type="RefSeq" id="XP_640770.1">
    <property type="nucleotide sequence ID" value="XM_635678.1"/>
</dbReference>
<dbReference type="FunCoup" id="Q54UK6">
    <property type="interactions" value="243"/>
</dbReference>
<dbReference type="PaxDb" id="44689-DDB0232104"/>
<dbReference type="EnsemblProtists" id="EAL66806">
    <property type="protein sequence ID" value="EAL66806"/>
    <property type="gene ID" value="DDB_G0281019"/>
</dbReference>
<dbReference type="GeneID" id="8622823"/>
<dbReference type="KEGG" id="ddi:DDB_G0281019"/>
<dbReference type="dictyBase" id="DDB_G0281019"/>
<dbReference type="HOGENOM" id="CLU_181850_0_0_1"/>
<dbReference type="InParanoid" id="Q54UK6"/>
<dbReference type="PRO" id="PR:Q54UK6"/>
<dbReference type="Proteomes" id="UP000002195">
    <property type="component" value="Chromosome 3"/>
</dbReference>
<dbReference type="GO" id="GO:0030587">
    <property type="term" value="P:sorocarp development"/>
    <property type="evidence" value="ECO:0000318"/>
    <property type="project" value="GO_Central"/>
</dbReference>
<dbReference type="InterPro" id="IPR050533">
    <property type="entry name" value="HssA/B-like_chaperone"/>
</dbReference>
<dbReference type="InterPro" id="IPR008455">
    <property type="entry name" value="HssA/B-related"/>
</dbReference>
<dbReference type="PANTHER" id="PTHR31059">
    <property type="entry name" value="HSSA/B-LIKE PROTEIN 1-RELATED-RELATED"/>
    <property type="match status" value="1"/>
</dbReference>
<dbReference type="PANTHER" id="PTHR31059:SF5">
    <property type="entry name" value="HSSA_B-LIKE PROTEIN 1-RELATED"/>
    <property type="match status" value="1"/>
</dbReference>
<dbReference type="Pfam" id="PF05710">
    <property type="entry name" value="Coiled"/>
    <property type="match status" value="1"/>
</dbReference>
<feature type="chain" id="PRO_0000330420" description="HssA/B-like protein 52">
    <location>
        <begin position="1"/>
        <end position="91"/>
    </location>
</feature>
<feature type="region of interest" description="Disordered" evidence="1">
    <location>
        <begin position="1"/>
        <end position="20"/>
    </location>
</feature>
<feature type="region of interest" description="Disordered" evidence="1">
    <location>
        <begin position="72"/>
        <end position="91"/>
    </location>
</feature>
<accession>Q54UK6</accession>
<reference key="1">
    <citation type="journal article" date="2005" name="Nature">
        <title>The genome of the social amoeba Dictyostelium discoideum.</title>
        <authorList>
            <person name="Eichinger L."/>
            <person name="Pachebat J.A."/>
            <person name="Gloeckner G."/>
            <person name="Rajandream M.A."/>
            <person name="Sucgang R."/>
            <person name="Berriman M."/>
            <person name="Song J."/>
            <person name="Olsen R."/>
            <person name="Szafranski K."/>
            <person name="Xu Q."/>
            <person name="Tunggal B."/>
            <person name="Kummerfeld S."/>
            <person name="Madera M."/>
            <person name="Konfortov B.A."/>
            <person name="Rivero F."/>
            <person name="Bankier A.T."/>
            <person name="Lehmann R."/>
            <person name="Hamlin N."/>
            <person name="Davies R."/>
            <person name="Gaudet P."/>
            <person name="Fey P."/>
            <person name="Pilcher K."/>
            <person name="Chen G."/>
            <person name="Saunders D."/>
            <person name="Sodergren E.J."/>
            <person name="Davis P."/>
            <person name="Kerhornou A."/>
            <person name="Nie X."/>
            <person name="Hall N."/>
            <person name="Anjard C."/>
            <person name="Hemphill L."/>
            <person name="Bason N."/>
            <person name="Farbrother P."/>
            <person name="Desany B."/>
            <person name="Just E."/>
            <person name="Morio T."/>
            <person name="Rost R."/>
            <person name="Churcher C.M."/>
            <person name="Cooper J."/>
            <person name="Haydock S."/>
            <person name="van Driessche N."/>
            <person name="Cronin A."/>
            <person name="Goodhead I."/>
            <person name="Muzny D.M."/>
            <person name="Mourier T."/>
            <person name="Pain A."/>
            <person name="Lu M."/>
            <person name="Harper D."/>
            <person name="Lindsay R."/>
            <person name="Hauser H."/>
            <person name="James K.D."/>
            <person name="Quiles M."/>
            <person name="Madan Babu M."/>
            <person name="Saito T."/>
            <person name="Buchrieser C."/>
            <person name="Wardroper A."/>
            <person name="Felder M."/>
            <person name="Thangavelu M."/>
            <person name="Johnson D."/>
            <person name="Knights A."/>
            <person name="Loulseged H."/>
            <person name="Mungall K.L."/>
            <person name="Oliver K."/>
            <person name="Price C."/>
            <person name="Quail M.A."/>
            <person name="Urushihara H."/>
            <person name="Hernandez J."/>
            <person name="Rabbinowitsch E."/>
            <person name="Steffen D."/>
            <person name="Sanders M."/>
            <person name="Ma J."/>
            <person name="Kohara Y."/>
            <person name="Sharp S."/>
            <person name="Simmonds M.N."/>
            <person name="Spiegler S."/>
            <person name="Tivey A."/>
            <person name="Sugano S."/>
            <person name="White B."/>
            <person name="Walker D."/>
            <person name="Woodward J.R."/>
            <person name="Winckler T."/>
            <person name="Tanaka Y."/>
            <person name="Shaulsky G."/>
            <person name="Schleicher M."/>
            <person name="Weinstock G.M."/>
            <person name="Rosenthal A."/>
            <person name="Cox E.C."/>
            <person name="Chisholm R.L."/>
            <person name="Gibbs R.A."/>
            <person name="Loomis W.F."/>
            <person name="Platzer M."/>
            <person name="Kay R.R."/>
            <person name="Williams J.G."/>
            <person name="Dear P.H."/>
            <person name="Noegel A.A."/>
            <person name="Barrell B.G."/>
            <person name="Kuspa A."/>
        </authorList>
    </citation>
    <scope>NUCLEOTIDE SEQUENCE [LARGE SCALE GENOMIC DNA]</scope>
    <source>
        <strain>AX4</strain>
    </source>
</reference>
<sequence length="91" mass="8302">MTLFSSISSISNPMTSSKSSIASFGSGTSMGSNSIACGGGCGGSDGILGLGLGLSLGLGLGLNLTGGSRSRGGCGGSNGSMGGGNGSCCGI</sequence>
<name>HSL52_DICDI</name>
<comment type="similarity">
    <text evidence="2">Belongs to the hssA/B family.</text>
</comment>
<organism>
    <name type="scientific">Dictyostelium discoideum</name>
    <name type="common">Social amoeba</name>
    <dbReference type="NCBI Taxonomy" id="44689"/>
    <lineage>
        <taxon>Eukaryota</taxon>
        <taxon>Amoebozoa</taxon>
        <taxon>Evosea</taxon>
        <taxon>Eumycetozoa</taxon>
        <taxon>Dictyostelia</taxon>
        <taxon>Dictyosteliales</taxon>
        <taxon>Dictyosteliaceae</taxon>
        <taxon>Dictyostelium</taxon>
    </lineage>
</organism>
<evidence type="ECO:0000256" key="1">
    <source>
        <dbReference type="SAM" id="MobiDB-lite"/>
    </source>
</evidence>
<evidence type="ECO:0000305" key="2"/>